<gene>
    <name type="primary">fli1</name>
    <name type="synonym">fli</name>
</gene>
<name>FLI1_XENLA</name>
<protein>
    <recommendedName>
        <fullName>Retroviral integration site protein Fli-1 homolog</fullName>
    </recommendedName>
</protein>
<proteinExistence type="evidence at transcript level"/>
<reference key="1">
    <citation type="journal article" date="1993" name="Mech. Dev.">
        <title>Xl-fli, the Xenopus homologue of the fli-1 gene, is expressed during embryogenesis in a restricted pattern evocative of neural crest cell distribution.</title>
        <authorList>
            <person name="Meyer D."/>
            <person name="Wolff C.M."/>
            <person name="Stiegler P."/>
            <person name="Senan F."/>
            <person name="Befort N."/>
            <person name="Befort J.J."/>
            <person name="Remy P."/>
        </authorList>
    </citation>
    <scope>NUCLEOTIDE SEQUENCE [MRNA]</scope>
</reference>
<accession>P41157</accession>
<feature type="chain" id="PRO_0000204126" description="Retroviral integration site protein Fli-1 homolog">
    <location>
        <begin position="1"/>
        <end position="453"/>
    </location>
</feature>
<feature type="domain" description="PNT" evidence="2">
    <location>
        <begin position="111"/>
        <end position="197"/>
    </location>
</feature>
<feature type="DNA-binding region" description="ETS" evidence="1">
    <location>
        <begin position="282"/>
        <end position="362"/>
    </location>
</feature>
<feature type="region of interest" description="Disordered" evidence="3">
    <location>
        <begin position="201"/>
        <end position="273"/>
    </location>
</feature>
<feature type="compositionally biased region" description="Polar residues" evidence="3">
    <location>
        <begin position="201"/>
        <end position="214"/>
    </location>
</feature>
<feature type="compositionally biased region" description="Basic and acidic residues" evidence="3">
    <location>
        <begin position="215"/>
        <end position="226"/>
    </location>
</feature>
<feature type="compositionally biased region" description="Polar residues" evidence="3">
    <location>
        <begin position="230"/>
        <end position="239"/>
    </location>
</feature>
<feature type="compositionally biased region" description="Polar residues" evidence="3">
    <location>
        <begin position="246"/>
        <end position="273"/>
    </location>
</feature>
<comment type="subcellular location">
    <subcellularLocation>
        <location>Nucleus</location>
    </subcellularLocation>
</comment>
<comment type="developmental stage">
    <text>Expressed during embryogenesis.</text>
</comment>
<comment type="similarity">
    <text evidence="4">Belongs to the ETS family.</text>
</comment>
<organism>
    <name type="scientific">Xenopus laevis</name>
    <name type="common">African clawed frog</name>
    <dbReference type="NCBI Taxonomy" id="8355"/>
    <lineage>
        <taxon>Eukaryota</taxon>
        <taxon>Metazoa</taxon>
        <taxon>Chordata</taxon>
        <taxon>Craniata</taxon>
        <taxon>Vertebrata</taxon>
        <taxon>Euteleostomi</taxon>
        <taxon>Amphibia</taxon>
        <taxon>Batrachia</taxon>
        <taxon>Anura</taxon>
        <taxon>Pipoidea</taxon>
        <taxon>Pipidae</taxon>
        <taxon>Xenopodinae</taxon>
        <taxon>Xenopus</taxon>
        <taxon>Xenopus</taxon>
    </lineage>
</organism>
<sequence length="453" mass="51016">MDGTIKEALSVVSDDQSLFDSAYGASSHLSKADMTASANPDYGQPHKINPIPPQQDWINQPMRVNIKREYEHMNGSRESPVDCSINKCSKLIGGSEGNAMTYTYMDEKNGPPPPNMTTNERRVIVPADPALWSQDHVRQWLEWAIKEYGLVEIDCSLFQNIDGKELCKMSKEDFLRSTSIYNTEVLLSHLNYLRDSSSSLGYNTQAHTDQSSRLTAKEDPSYEAVRRSGWGNSMSSPVTKSPPMGGTQNVNKSGDQQRSQPDPYQILGPTSSRLANPGSGQIQLWQFLLELLSDSSNASCITWEGTNGEFKMTDPDEVARRWGERKSKPNMNYDKLSRALRYYYDKSIMTKVHGKRYAYKFDFHGIAQALQPHPTDTSMYKYPSEFSYMPSYHSHQQKVNFVPSHPSSMPVTSSGFFGATSPYWNSPSANIYPNPNVPRHPNTHVQSHLGGFY</sequence>
<keyword id="KW-0010">Activator</keyword>
<keyword id="KW-0238">DNA-binding</keyword>
<keyword id="KW-0539">Nucleus</keyword>
<keyword id="KW-1185">Reference proteome</keyword>
<keyword id="KW-0804">Transcription</keyword>
<keyword id="KW-0805">Transcription regulation</keyword>
<dbReference type="EMBL" id="X66979">
    <property type="protein sequence ID" value="CAA47389.1"/>
    <property type="molecule type" value="mRNA"/>
</dbReference>
<dbReference type="PIR" id="S49013">
    <property type="entry name" value="S49013"/>
</dbReference>
<dbReference type="RefSeq" id="NP_001084371.1">
    <property type="nucleotide sequence ID" value="NM_001090902.1"/>
</dbReference>
<dbReference type="BMRB" id="P41157"/>
<dbReference type="SMR" id="P41157"/>
<dbReference type="GeneID" id="399466"/>
<dbReference type="KEGG" id="xla:399466"/>
<dbReference type="AGR" id="Xenbase:XB-GENE-6253886"/>
<dbReference type="CTD" id="399466"/>
<dbReference type="Xenbase" id="XB-GENE-6253886">
    <property type="gene designation" value="fli1.S"/>
</dbReference>
<dbReference type="OrthoDB" id="10067219at2759"/>
<dbReference type="Proteomes" id="UP000186698">
    <property type="component" value="Chromosome 7S"/>
</dbReference>
<dbReference type="Bgee" id="399466">
    <property type="expression patterns" value="Expressed in lung and 14 other cell types or tissues"/>
</dbReference>
<dbReference type="GO" id="GO:0005634">
    <property type="term" value="C:nucleus"/>
    <property type="evidence" value="ECO:0000318"/>
    <property type="project" value="GO_Central"/>
</dbReference>
<dbReference type="GO" id="GO:0000981">
    <property type="term" value="F:DNA-binding transcription factor activity, RNA polymerase II-specific"/>
    <property type="evidence" value="ECO:0000318"/>
    <property type="project" value="GO_Central"/>
</dbReference>
<dbReference type="GO" id="GO:0043565">
    <property type="term" value="F:sequence-specific DNA binding"/>
    <property type="evidence" value="ECO:0007669"/>
    <property type="project" value="InterPro"/>
</dbReference>
<dbReference type="GO" id="GO:0030154">
    <property type="term" value="P:cell differentiation"/>
    <property type="evidence" value="ECO:0000318"/>
    <property type="project" value="GO_Central"/>
</dbReference>
<dbReference type="GO" id="GO:0006357">
    <property type="term" value="P:regulation of transcription by RNA polymerase II"/>
    <property type="evidence" value="ECO:0000318"/>
    <property type="project" value="GO_Central"/>
</dbReference>
<dbReference type="CDD" id="cd08541">
    <property type="entry name" value="SAM_PNT-FLI-1"/>
    <property type="match status" value="1"/>
</dbReference>
<dbReference type="FunFam" id="1.10.150.50:FF:000010">
    <property type="entry name" value="Fli-1 proto-oncogene, ETS transcription factor"/>
    <property type="match status" value="1"/>
</dbReference>
<dbReference type="FunFam" id="1.10.10.10:FF:000039">
    <property type="entry name" value="Friend leukemia integration 1 transcription factor"/>
    <property type="match status" value="1"/>
</dbReference>
<dbReference type="Gene3D" id="1.10.150.50">
    <property type="entry name" value="Transcription Factor, Ets-1"/>
    <property type="match status" value="1"/>
</dbReference>
<dbReference type="Gene3D" id="1.10.10.10">
    <property type="entry name" value="Winged helix-like DNA-binding domain superfamily/Winged helix DNA-binding domain"/>
    <property type="match status" value="1"/>
</dbReference>
<dbReference type="InterPro" id="IPR000418">
    <property type="entry name" value="Ets_dom"/>
</dbReference>
<dbReference type="InterPro" id="IPR046328">
    <property type="entry name" value="ETS_fam"/>
</dbReference>
<dbReference type="InterPro" id="IPR003118">
    <property type="entry name" value="Pointed_dom"/>
</dbReference>
<dbReference type="InterPro" id="IPR013761">
    <property type="entry name" value="SAM/pointed_sf"/>
</dbReference>
<dbReference type="InterPro" id="IPR035573">
    <property type="entry name" value="SAM_PNT-FLI-1"/>
</dbReference>
<dbReference type="InterPro" id="IPR036388">
    <property type="entry name" value="WH-like_DNA-bd_sf"/>
</dbReference>
<dbReference type="InterPro" id="IPR036390">
    <property type="entry name" value="WH_DNA-bd_sf"/>
</dbReference>
<dbReference type="PANTHER" id="PTHR11849">
    <property type="entry name" value="ETS"/>
    <property type="match status" value="1"/>
</dbReference>
<dbReference type="PANTHER" id="PTHR11849:SF161">
    <property type="entry name" value="FRIEND LEUKEMIA INTEGRATION 1 TRANSCRIPTION FACTOR"/>
    <property type="match status" value="1"/>
</dbReference>
<dbReference type="Pfam" id="PF00178">
    <property type="entry name" value="Ets"/>
    <property type="match status" value="1"/>
</dbReference>
<dbReference type="Pfam" id="PF02198">
    <property type="entry name" value="SAM_PNT"/>
    <property type="match status" value="1"/>
</dbReference>
<dbReference type="PRINTS" id="PR00454">
    <property type="entry name" value="ETSDOMAIN"/>
</dbReference>
<dbReference type="SMART" id="SM00413">
    <property type="entry name" value="ETS"/>
    <property type="match status" value="1"/>
</dbReference>
<dbReference type="SMART" id="SM00251">
    <property type="entry name" value="SAM_PNT"/>
    <property type="match status" value="1"/>
</dbReference>
<dbReference type="SUPFAM" id="SSF47769">
    <property type="entry name" value="SAM/Pointed domain"/>
    <property type="match status" value="1"/>
</dbReference>
<dbReference type="SUPFAM" id="SSF46785">
    <property type="entry name" value="Winged helix' DNA-binding domain"/>
    <property type="match status" value="1"/>
</dbReference>
<dbReference type="PROSITE" id="PS00345">
    <property type="entry name" value="ETS_DOMAIN_1"/>
    <property type="match status" value="1"/>
</dbReference>
<dbReference type="PROSITE" id="PS00346">
    <property type="entry name" value="ETS_DOMAIN_2"/>
    <property type="match status" value="1"/>
</dbReference>
<dbReference type="PROSITE" id="PS50061">
    <property type="entry name" value="ETS_DOMAIN_3"/>
    <property type="match status" value="1"/>
</dbReference>
<dbReference type="PROSITE" id="PS51433">
    <property type="entry name" value="PNT"/>
    <property type="match status" value="1"/>
</dbReference>
<evidence type="ECO:0000255" key="1">
    <source>
        <dbReference type="PROSITE-ProRule" id="PRU00237"/>
    </source>
</evidence>
<evidence type="ECO:0000255" key="2">
    <source>
        <dbReference type="PROSITE-ProRule" id="PRU00762"/>
    </source>
</evidence>
<evidence type="ECO:0000256" key="3">
    <source>
        <dbReference type="SAM" id="MobiDB-lite"/>
    </source>
</evidence>
<evidence type="ECO:0000305" key="4"/>